<name>MOBA_VIBC1</name>
<evidence type="ECO:0000255" key="1">
    <source>
        <dbReference type="HAMAP-Rule" id="MF_00316"/>
    </source>
</evidence>
<reference key="1">
    <citation type="submission" date="2007-08" db="EMBL/GenBank/DDBJ databases">
        <authorList>
            <consortium name="The Vibrio harveyi Genome Sequencing Project"/>
            <person name="Bassler B."/>
            <person name="Clifton S.W."/>
            <person name="Fulton L."/>
            <person name="Delehaunty K."/>
            <person name="Fronick C."/>
            <person name="Harrison M."/>
            <person name="Markivic C."/>
            <person name="Fulton R."/>
            <person name="Tin-Wollam A.-M."/>
            <person name="Shah N."/>
            <person name="Pepin K."/>
            <person name="Nash W."/>
            <person name="Thiruvilangam P."/>
            <person name="Bhonagiri V."/>
            <person name="Waters C."/>
            <person name="Tu K.C."/>
            <person name="Irgon J."/>
            <person name="Wilson R.K."/>
        </authorList>
    </citation>
    <scope>NUCLEOTIDE SEQUENCE [LARGE SCALE GENOMIC DNA]</scope>
    <source>
        <strain>ATCC BAA-1116 / BB120</strain>
    </source>
</reference>
<comment type="function">
    <text evidence="1">Transfers a GMP moiety from GTP to Mo-molybdopterin (Mo-MPT) cofactor (Moco or molybdenum cofactor) to form Mo-molybdopterin guanine dinucleotide (Mo-MGD) cofactor.</text>
</comment>
<comment type="catalytic activity">
    <reaction evidence="1">
        <text>Mo-molybdopterin + GTP + H(+) = Mo-molybdopterin guanine dinucleotide + diphosphate</text>
        <dbReference type="Rhea" id="RHEA:34243"/>
        <dbReference type="ChEBI" id="CHEBI:15378"/>
        <dbReference type="ChEBI" id="CHEBI:33019"/>
        <dbReference type="ChEBI" id="CHEBI:37565"/>
        <dbReference type="ChEBI" id="CHEBI:71302"/>
        <dbReference type="ChEBI" id="CHEBI:71310"/>
        <dbReference type="EC" id="2.7.7.77"/>
    </reaction>
</comment>
<comment type="cofactor">
    <cofactor evidence="1">
        <name>Mg(2+)</name>
        <dbReference type="ChEBI" id="CHEBI:18420"/>
    </cofactor>
</comment>
<comment type="subunit">
    <text evidence="1">Monomer.</text>
</comment>
<comment type="subcellular location">
    <subcellularLocation>
        <location evidence="1">Cytoplasm</location>
    </subcellularLocation>
</comment>
<comment type="domain">
    <text evidence="1">The N-terminal domain determines nucleotide recognition and specific binding, while the C-terminal domain determines the specific binding to the target protein.</text>
</comment>
<comment type="similarity">
    <text evidence="1">Belongs to the MobA family.</text>
</comment>
<accession>A7N0T3</accession>
<organism>
    <name type="scientific">Vibrio campbellii (strain ATCC BAA-1116)</name>
    <dbReference type="NCBI Taxonomy" id="2902295"/>
    <lineage>
        <taxon>Bacteria</taxon>
        <taxon>Pseudomonadati</taxon>
        <taxon>Pseudomonadota</taxon>
        <taxon>Gammaproteobacteria</taxon>
        <taxon>Vibrionales</taxon>
        <taxon>Vibrionaceae</taxon>
        <taxon>Vibrio</taxon>
    </lineage>
</organism>
<keyword id="KW-0963">Cytoplasm</keyword>
<keyword id="KW-0342">GTP-binding</keyword>
<keyword id="KW-0460">Magnesium</keyword>
<keyword id="KW-0479">Metal-binding</keyword>
<keyword id="KW-0501">Molybdenum cofactor biosynthesis</keyword>
<keyword id="KW-0547">Nucleotide-binding</keyword>
<keyword id="KW-0808">Transferase</keyword>
<proteinExistence type="inferred from homology"/>
<feature type="chain" id="PRO_1000019164" description="Molybdenum cofactor guanylyltransferase">
    <location>
        <begin position="1"/>
        <end position="195"/>
    </location>
</feature>
<feature type="binding site" evidence="1">
    <location>
        <begin position="12"/>
        <end position="14"/>
    </location>
    <ligand>
        <name>GTP</name>
        <dbReference type="ChEBI" id="CHEBI:37565"/>
    </ligand>
</feature>
<feature type="binding site" evidence="1">
    <location>
        <position position="25"/>
    </location>
    <ligand>
        <name>GTP</name>
        <dbReference type="ChEBI" id="CHEBI:37565"/>
    </ligand>
</feature>
<feature type="binding site" evidence="1">
    <location>
        <position position="53"/>
    </location>
    <ligand>
        <name>GTP</name>
        <dbReference type="ChEBI" id="CHEBI:37565"/>
    </ligand>
</feature>
<feature type="binding site" evidence="1">
    <location>
        <position position="70"/>
    </location>
    <ligand>
        <name>GTP</name>
        <dbReference type="ChEBI" id="CHEBI:37565"/>
    </ligand>
</feature>
<feature type="binding site" evidence="1">
    <location>
        <position position="100"/>
    </location>
    <ligand>
        <name>GTP</name>
        <dbReference type="ChEBI" id="CHEBI:37565"/>
    </ligand>
</feature>
<feature type="binding site" evidence="1">
    <location>
        <position position="100"/>
    </location>
    <ligand>
        <name>Mg(2+)</name>
        <dbReference type="ChEBI" id="CHEBI:18420"/>
    </ligand>
</feature>
<gene>
    <name evidence="1" type="primary">mobA</name>
    <name type="ordered locus">VIBHAR_02261</name>
</gene>
<protein>
    <recommendedName>
        <fullName evidence="1">Molybdenum cofactor guanylyltransferase</fullName>
        <shortName evidence="1">MoCo guanylyltransferase</shortName>
        <ecNumber evidence="1">2.7.7.77</ecNumber>
    </recommendedName>
    <alternativeName>
        <fullName evidence="1">GTP:molybdopterin guanylyltransferase</fullName>
    </alternativeName>
    <alternativeName>
        <fullName evidence="1">Mo-MPT guanylyltransferase</fullName>
    </alternativeName>
    <alternativeName>
        <fullName evidence="1">Molybdopterin guanylyltransferase</fullName>
    </alternativeName>
    <alternativeName>
        <fullName evidence="1">Molybdopterin-guanine dinucleotide synthase</fullName>
        <shortName evidence="1">MGD synthase</shortName>
    </alternativeName>
</protein>
<dbReference type="EC" id="2.7.7.77" evidence="1"/>
<dbReference type="EMBL" id="CP000789">
    <property type="protein sequence ID" value="ABU71223.1"/>
    <property type="molecule type" value="Genomic_DNA"/>
</dbReference>
<dbReference type="RefSeq" id="WP_012127958.1">
    <property type="nucleotide sequence ID" value="NC_009783.1"/>
</dbReference>
<dbReference type="SMR" id="A7N0T3"/>
<dbReference type="KEGG" id="vha:VIBHAR_02261"/>
<dbReference type="PATRIC" id="fig|338187.25.peg.439"/>
<dbReference type="Proteomes" id="UP000008152">
    <property type="component" value="Chromosome I"/>
</dbReference>
<dbReference type="GO" id="GO:0005737">
    <property type="term" value="C:cytoplasm"/>
    <property type="evidence" value="ECO:0007669"/>
    <property type="project" value="UniProtKB-SubCell"/>
</dbReference>
<dbReference type="GO" id="GO:0005525">
    <property type="term" value="F:GTP binding"/>
    <property type="evidence" value="ECO:0007669"/>
    <property type="project" value="UniProtKB-UniRule"/>
</dbReference>
<dbReference type="GO" id="GO:0046872">
    <property type="term" value="F:metal ion binding"/>
    <property type="evidence" value="ECO:0007669"/>
    <property type="project" value="UniProtKB-KW"/>
</dbReference>
<dbReference type="GO" id="GO:0061603">
    <property type="term" value="F:molybdenum cofactor guanylyltransferase activity"/>
    <property type="evidence" value="ECO:0007669"/>
    <property type="project" value="UniProtKB-EC"/>
</dbReference>
<dbReference type="GO" id="GO:1902758">
    <property type="term" value="P:bis(molybdopterin guanine dinucleotide)molybdenum biosynthetic process"/>
    <property type="evidence" value="ECO:0007669"/>
    <property type="project" value="TreeGrafter"/>
</dbReference>
<dbReference type="CDD" id="cd02503">
    <property type="entry name" value="MobA"/>
    <property type="match status" value="1"/>
</dbReference>
<dbReference type="Gene3D" id="3.90.550.10">
    <property type="entry name" value="Spore Coat Polysaccharide Biosynthesis Protein SpsA, Chain A"/>
    <property type="match status" value="1"/>
</dbReference>
<dbReference type="HAMAP" id="MF_00316">
    <property type="entry name" value="MobA"/>
    <property type="match status" value="1"/>
</dbReference>
<dbReference type="InterPro" id="IPR025877">
    <property type="entry name" value="MobA-like_NTP_Trfase"/>
</dbReference>
<dbReference type="InterPro" id="IPR013482">
    <property type="entry name" value="Molybde_CF_guanTrfase"/>
</dbReference>
<dbReference type="InterPro" id="IPR029044">
    <property type="entry name" value="Nucleotide-diphossugar_trans"/>
</dbReference>
<dbReference type="NCBIfam" id="TIGR02665">
    <property type="entry name" value="molyb_mobA"/>
    <property type="match status" value="1"/>
</dbReference>
<dbReference type="PANTHER" id="PTHR19136">
    <property type="entry name" value="MOLYBDENUM COFACTOR GUANYLYLTRANSFERASE"/>
    <property type="match status" value="1"/>
</dbReference>
<dbReference type="PANTHER" id="PTHR19136:SF81">
    <property type="entry name" value="MOLYBDENUM COFACTOR GUANYLYLTRANSFERASE"/>
    <property type="match status" value="1"/>
</dbReference>
<dbReference type="Pfam" id="PF12804">
    <property type="entry name" value="NTP_transf_3"/>
    <property type="match status" value="1"/>
</dbReference>
<dbReference type="SUPFAM" id="SSF53448">
    <property type="entry name" value="Nucleotide-diphospho-sugar transferases"/>
    <property type="match status" value="1"/>
</dbReference>
<sequence>MLQPTQTSWVILAGGQASRMGGKDKGLIELNQKPLIEHVIERLSPQTPSILINANRNQDAYRAFGFVFSDQFKDFPGPMGGIHAGLVHAETDWVGFVPCDSPQINTDLVERFCNAVKEDTDILVAHDGDHQQPVFTLYHKRVLPKLTAFLERGDRKIILLYKECNTSYVDFSDSPNCFVNLNTPEELAQFGQLES</sequence>